<proteinExistence type="inferred from homology"/>
<evidence type="ECO:0000255" key="1">
    <source>
        <dbReference type="HAMAP-Rule" id="MF_01345"/>
    </source>
</evidence>
<evidence type="ECO:0000305" key="2"/>
<protein>
    <recommendedName>
        <fullName evidence="1">Small ribosomal subunit protein uS17</fullName>
    </recommendedName>
    <alternativeName>
        <fullName evidence="2">30S ribosomal protein S17</fullName>
    </alternativeName>
</protein>
<comment type="function">
    <text evidence="1">One of the primary rRNA binding proteins, it binds specifically to the 5'-end of 16S ribosomal RNA.</text>
</comment>
<comment type="subunit">
    <text evidence="1">Part of the 30S ribosomal subunit.</text>
</comment>
<comment type="similarity">
    <text evidence="1">Belongs to the universal ribosomal protein uS17 family.</text>
</comment>
<accession>Q057B3</accession>
<feature type="chain" id="PRO_1000054922" description="Small ribosomal subunit protein uS17">
    <location>
        <begin position="1"/>
        <end position="84"/>
    </location>
</feature>
<keyword id="KW-1185">Reference proteome</keyword>
<keyword id="KW-0687">Ribonucleoprotein</keyword>
<keyword id="KW-0689">Ribosomal protein</keyword>
<keyword id="KW-0694">RNA-binding</keyword>
<keyword id="KW-0699">rRNA-binding</keyword>
<sequence>MNEKKNLLNGYIVSNKMNKSAVVIVERKIKHSIYKKFIKKRTKLCIHDEKNICNIGDIVTIRECRPISKTKSWILVNILEKSIV</sequence>
<reference key="1">
    <citation type="journal article" date="2006" name="Science">
        <title>A small microbial genome: the end of a long symbiotic relationship?</title>
        <authorList>
            <person name="Perez-Brocal V."/>
            <person name="Gil R."/>
            <person name="Ramos S."/>
            <person name="Lamelas A."/>
            <person name="Postigo M."/>
            <person name="Michelena J.M."/>
            <person name="Silva F.J."/>
            <person name="Moya A."/>
            <person name="Latorre A."/>
        </authorList>
    </citation>
    <scope>NUCLEOTIDE SEQUENCE [LARGE SCALE GENOMIC DNA]</scope>
    <source>
        <strain>Cc</strain>
    </source>
</reference>
<name>RS17_BUCCC</name>
<organism>
    <name type="scientific">Buchnera aphidicola subsp. Cinara cedri (strain Cc)</name>
    <dbReference type="NCBI Taxonomy" id="372461"/>
    <lineage>
        <taxon>Bacteria</taxon>
        <taxon>Pseudomonadati</taxon>
        <taxon>Pseudomonadota</taxon>
        <taxon>Gammaproteobacteria</taxon>
        <taxon>Enterobacterales</taxon>
        <taxon>Erwiniaceae</taxon>
        <taxon>Buchnera</taxon>
    </lineage>
</organism>
<dbReference type="EMBL" id="CP000263">
    <property type="protein sequence ID" value="ABJ90786.1"/>
    <property type="molecule type" value="Genomic_DNA"/>
</dbReference>
<dbReference type="RefSeq" id="WP_011672705.1">
    <property type="nucleotide sequence ID" value="NC_008513.1"/>
</dbReference>
<dbReference type="SMR" id="Q057B3"/>
<dbReference type="STRING" id="372461.BCc_332"/>
<dbReference type="KEGG" id="bcc:BCc_332"/>
<dbReference type="eggNOG" id="COG0186">
    <property type="taxonomic scope" value="Bacteria"/>
</dbReference>
<dbReference type="HOGENOM" id="CLU_073626_1_1_6"/>
<dbReference type="OrthoDB" id="9811714at2"/>
<dbReference type="Proteomes" id="UP000000669">
    <property type="component" value="Chromosome"/>
</dbReference>
<dbReference type="GO" id="GO:0022627">
    <property type="term" value="C:cytosolic small ribosomal subunit"/>
    <property type="evidence" value="ECO:0007669"/>
    <property type="project" value="TreeGrafter"/>
</dbReference>
<dbReference type="GO" id="GO:0019843">
    <property type="term" value="F:rRNA binding"/>
    <property type="evidence" value="ECO:0007669"/>
    <property type="project" value="UniProtKB-UniRule"/>
</dbReference>
<dbReference type="GO" id="GO:0003735">
    <property type="term" value="F:structural constituent of ribosome"/>
    <property type="evidence" value="ECO:0007669"/>
    <property type="project" value="InterPro"/>
</dbReference>
<dbReference type="GO" id="GO:0006412">
    <property type="term" value="P:translation"/>
    <property type="evidence" value="ECO:0007669"/>
    <property type="project" value="UniProtKB-UniRule"/>
</dbReference>
<dbReference type="CDD" id="cd00364">
    <property type="entry name" value="Ribosomal_uS17"/>
    <property type="match status" value="1"/>
</dbReference>
<dbReference type="Gene3D" id="2.40.50.140">
    <property type="entry name" value="Nucleic acid-binding proteins"/>
    <property type="match status" value="1"/>
</dbReference>
<dbReference type="HAMAP" id="MF_01345_B">
    <property type="entry name" value="Ribosomal_uS17_B"/>
    <property type="match status" value="1"/>
</dbReference>
<dbReference type="InterPro" id="IPR012340">
    <property type="entry name" value="NA-bd_OB-fold"/>
</dbReference>
<dbReference type="InterPro" id="IPR000266">
    <property type="entry name" value="Ribosomal_uS17"/>
</dbReference>
<dbReference type="InterPro" id="IPR019984">
    <property type="entry name" value="Ribosomal_uS17_bact/chlr"/>
</dbReference>
<dbReference type="InterPro" id="IPR019979">
    <property type="entry name" value="Ribosomal_uS17_CS"/>
</dbReference>
<dbReference type="NCBIfam" id="NF004123">
    <property type="entry name" value="PRK05610.1"/>
    <property type="match status" value="1"/>
</dbReference>
<dbReference type="NCBIfam" id="TIGR03635">
    <property type="entry name" value="uS17_bact"/>
    <property type="match status" value="1"/>
</dbReference>
<dbReference type="PANTHER" id="PTHR10744">
    <property type="entry name" value="40S RIBOSOMAL PROTEIN S11 FAMILY MEMBER"/>
    <property type="match status" value="1"/>
</dbReference>
<dbReference type="PANTHER" id="PTHR10744:SF1">
    <property type="entry name" value="SMALL RIBOSOMAL SUBUNIT PROTEIN US17M"/>
    <property type="match status" value="1"/>
</dbReference>
<dbReference type="Pfam" id="PF00366">
    <property type="entry name" value="Ribosomal_S17"/>
    <property type="match status" value="1"/>
</dbReference>
<dbReference type="PRINTS" id="PR00973">
    <property type="entry name" value="RIBOSOMALS17"/>
</dbReference>
<dbReference type="SUPFAM" id="SSF50249">
    <property type="entry name" value="Nucleic acid-binding proteins"/>
    <property type="match status" value="1"/>
</dbReference>
<dbReference type="PROSITE" id="PS00056">
    <property type="entry name" value="RIBOSOMAL_S17"/>
    <property type="match status" value="1"/>
</dbReference>
<gene>
    <name evidence="1" type="primary">rpsQ</name>
    <name type="ordered locus">BCc_332</name>
</gene>